<name>UVRC_STAAS</name>
<keyword id="KW-0963">Cytoplasm</keyword>
<keyword id="KW-0227">DNA damage</keyword>
<keyword id="KW-0228">DNA excision</keyword>
<keyword id="KW-0234">DNA repair</keyword>
<keyword id="KW-0267">Excision nuclease</keyword>
<keyword id="KW-0742">SOS response</keyword>
<reference key="1">
    <citation type="journal article" date="2004" name="Proc. Natl. Acad. Sci. U.S.A.">
        <title>Complete genomes of two clinical Staphylococcus aureus strains: evidence for the rapid evolution of virulence and drug resistance.</title>
        <authorList>
            <person name="Holden M.T.G."/>
            <person name="Feil E.J."/>
            <person name="Lindsay J.A."/>
            <person name="Peacock S.J."/>
            <person name="Day N.P.J."/>
            <person name="Enright M.C."/>
            <person name="Foster T.J."/>
            <person name="Moore C.E."/>
            <person name="Hurst L."/>
            <person name="Atkin R."/>
            <person name="Barron A."/>
            <person name="Bason N."/>
            <person name="Bentley S.D."/>
            <person name="Chillingworth C."/>
            <person name="Chillingworth T."/>
            <person name="Churcher C."/>
            <person name="Clark L."/>
            <person name="Corton C."/>
            <person name="Cronin A."/>
            <person name="Doggett J."/>
            <person name="Dowd L."/>
            <person name="Feltwell T."/>
            <person name="Hance Z."/>
            <person name="Harris B."/>
            <person name="Hauser H."/>
            <person name="Holroyd S."/>
            <person name="Jagels K."/>
            <person name="James K.D."/>
            <person name="Lennard N."/>
            <person name="Line A."/>
            <person name="Mayes R."/>
            <person name="Moule S."/>
            <person name="Mungall K."/>
            <person name="Ormond D."/>
            <person name="Quail M.A."/>
            <person name="Rabbinowitsch E."/>
            <person name="Rutherford K.M."/>
            <person name="Sanders M."/>
            <person name="Sharp S."/>
            <person name="Simmonds M."/>
            <person name="Stevens K."/>
            <person name="Whitehead S."/>
            <person name="Barrell B.G."/>
            <person name="Spratt B.G."/>
            <person name="Parkhill J."/>
        </authorList>
    </citation>
    <scope>NUCLEOTIDE SEQUENCE [LARGE SCALE GENOMIC DNA]</scope>
    <source>
        <strain>MSSA476</strain>
    </source>
</reference>
<proteinExistence type="inferred from homology"/>
<evidence type="ECO:0000255" key="1">
    <source>
        <dbReference type="HAMAP-Rule" id="MF_00203"/>
    </source>
</evidence>
<organism>
    <name type="scientific">Staphylococcus aureus (strain MSSA476)</name>
    <dbReference type="NCBI Taxonomy" id="282459"/>
    <lineage>
        <taxon>Bacteria</taxon>
        <taxon>Bacillati</taxon>
        <taxon>Bacillota</taxon>
        <taxon>Bacilli</taxon>
        <taxon>Bacillales</taxon>
        <taxon>Staphylococcaceae</taxon>
        <taxon>Staphylococcus</taxon>
    </lineage>
</organism>
<accession>Q6GA68</accession>
<protein>
    <recommendedName>
        <fullName evidence="1">UvrABC system protein C</fullName>
        <shortName evidence="1">Protein UvrC</shortName>
    </recommendedName>
    <alternativeName>
        <fullName evidence="1">Excinuclease ABC subunit C</fullName>
    </alternativeName>
</protein>
<dbReference type="EMBL" id="BX571857">
    <property type="protein sequence ID" value="CAG42855.1"/>
    <property type="molecule type" value="Genomic_DNA"/>
</dbReference>
<dbReference type="RefSeq" id="WP_000390525.1">
    <property type="nucleotide sequence ID" value="NC_002953.3"/>
</dbReference>
<dbReference type="SMR" id="Q6GA68"/>
<dbReference type="KEGG" id="sas:SAS1080"/>
<dbReference type="HOGENOM" id="CLU_014841_3_2_9"/>
<dbReference type="GO" id="GO:0005737">
    <property type="term" value="C:cytoplasm"/>
    <property type="evidence" value="ECO:0007669"/>
    <property type="project" value="UniProtKB-SubCell"/>
</dbReference>
<dbReference type="GO" id="GO:0009380">
    <property type="term" value="C:excinuclease repair complex"/>
    <property type="evidence" value="ECO:0007669"/>
    <property type="project" value="InterPro"/>
</dbReference>
<dbReference type="GO" id="GO:0003677">
    <property type="term" value="F:DNA binding"/>
    <property type="evidence" value="ECO:0007669"/>
    <property type="project" value="UniProtKB-UniRule"/>
</dbReference>
<dbReference type="GO" id="GO:0009381">
    <property type="term" value="F:excinuclease ABC activity"/>
    <property type="evidence" value="ECO:0007669"/>
    <property type="project" value="UniProtKB-UniRule"/>
</dbReference>
<dbReference type="GO" id="GO:0006289">
    <property type="term" value="P:nucleotide-excision repair"/>
    <property type="evidence" value="ECO:0007669"/>
    <property type="project" value="UniProtKB-UniRule"/>
</dbReference>
<dbReference type="GO" id="GO:0009432">
    <property type="term" value="P:SOS response"/>
    <property type="evidence" value="ECO:0007669"/>
    <property type="project" value="UniProtKB-UniRule"/>
</dbReference>
<dbReference type="CDD" id="cd10434">
    <property type="entry name" value="GIY-YIG_UvrC_Cho"/>
    <property type="match status" value="1"/>
</dbReference>
<dbReference type="FunFam" id="3.30.420.340:FF:000002">
    <property type="entry name" value="UvrABC system protein C"/>
    <property type="match status" value="1"/>
</dbReference>
<dbReference type="FunFam" id="3.40.1440.10:FF:000001">
    <property type="entry name" value="UvrABC system protein C"/>
    <property type="match status" value="1"/>
</dbReference>
<dbReference type="FunFam" id="4.10.860.10:FF:000007">
    <property type="entry name" value="UvrABC system protein C"/>
    <property type="match status" value="1"/>
</dbReference>
<dbReference type="Gene3D" id="1.10.150.20">
    <property type="entry name" value="5' to 3' exonuclease, C-terminal subdomain"/>
    <property type="match status" value="1"/>
</dbReference>
<dbReference type="Gene3D" id="3.40.1440.10">
    <property type="entry name" value="GIY-YIG endonuclease"/>
    <property type="match status" value="1"/>
</dbReference>
<dbReference type="Gene3D" id="4.10.860.10">
    <property type="entry name" value="UVR domain"/>
    <property type="match status" value="1"/>
</dbReference>
<dbReference type="Gene3D" id="3.30.420.340">
    <property type="entry name" value="UvrC, RNAse H endonuclease domain"/>
    <property type="match status" value="1"/>
</dbReference>
<dbReference type="HAMAP" id="MF_00203">
    <property type="entry name" value="UvrC"/>
    <property type="match status" value="1"/>
</dbReference>
<dbReference type="InterPro" id="IPR000305">
    <property type="entry name" value="GIY-YIG_endonuc"/>
</dbReference>
<dbReference type="InterPro" id="IPR035901">
    <property type="entry name" value="GIY-YIG_endonuc_sf"/>
</dbReference>
<dbReference type="InterPro" id="IPR047296">
    <property type="entry name" value="GIY-YIG_UvrC_Cho"/>
</dbReference>
<dbReference type="InterPro" id="IPR010994">
    <property type="entry name" value="RuvA_2-like"/>
</dbReference>
<dbReference type="InterPro" id="IPR001943">
    <property type="entry name" value="UVR_dom"/>
</dbReference>
<dbReference type="InterPro" id="IPR036876">
    <property type="entry name" value="UVR_dom_sf"/>
</dbReference>
<dbReference type="InterPro" id="IPR050066">
    <property type="entry name" value="UvrABC_protein_C"/>
</dbReference>
<dbReference type="InterPro" id="IPR004791">
    <property type="entry name" value="UvrC"/>
</dbReference>
<dbReference type="InterPro" id="IPR001162">
    <property type="entry name" value="UvrC_RNase_H_dom"/>
</dbReference>
<dbReference type="InterPro" id="IPR038476">
    <property type="entry name" value="UvrC_RNase_H_dom_sf"/>
</dbReference>
<dbReference type="NCBIfam" id="TIGR00194">
    <property type="entry name" value="uvrC"/>
    <property type="match status" value="1"/>
</dbReference>
<dbReference type="PANTHER" id="PTHR30562:SF1">
    <property type="entry name" value="UVRABC SYSTEM PROTEIN C"/>
    <property type="match status" value="1"/>
</dbReference>
<dbReference type="PANTHER" id="PTHR30562">
    <property type="entry name" value="UVRC/OXIDOREDUCTASE"/>
    <property type="match status" value="1"/>
</dbReference>
<dbReference type="Pfam" id="PF01541">
    <property type="entry name" value="GIY-YIG"/>
    <property type="match status" value="1"/>
</dbReference>
<dbReference type="Pfam" id="PF02151">
    <property type="entry name" value="UVR"/>
    <property type="match status" value="1"/>
</dbReference>
<dbReference type="Pfam" id="PF22920">
    <property type="entry name" value="UvrC_RNaseH"/>
    <property type="match status" value="1"/>
</dbReference>
<dbReference type="Pfam" id="PF08459">
    <property type="entry name" value="UvrC_RNaseH_dom"/>
    <property type="match status" value="1"/>
</dbReference>
<dbReference type="SMART" id="SM00465">
    <property type="entry name" value="GIYc"/>
    <property type="match status" value="1"/>
</dbReference>
<dbReference type="SUPFAM" id="SSF46600">
    <property type="entry name" value="C-terminal UvrC-binding domain of UvrB"/>
    <property type="match status" value="1"/>
</dbReference>
<dbReference type="SUPFAM" id="SSF82771">
    <property type="entry name" value="GIY-YIG endonuclease"/>
    <property type="match status" value="1"/>
</dbReference>
<dbReference type="SUPFAM" id="SSF47781">
    <property type="entry name" value="RuvA domain 2-like"/>
    <property type="match status" value="1"/>
</dbReference>
<dbReference type="PROSITE" id="PS50164">
    <property type="entry name" value="GIY_YIG"/>
    <property type="match status" value="1"/>
</dbReference>
<dbReference type="PROSITE" id="PS50151">
    <property type="entry name" value="UVR"/>
    <property type="match status" value="1"/>
</dbReference>
<dbReference type="PROSITE" id="PS50165">
    <property type="entry name" value="UVRC"/>
    <property type="match status" value="1"/>
</dbReference>
<feature type="chain" id="PRO_0000138340" description="UvrABC system protein C">
    <location>
        <begin position="1"/>
        <end position="593"/>
    </location>
</feature>
<feature type="domain" description="GIY-YIG" evidence="1">
    <location>
        <begin position="17"/>
        <end position="94"/>
    </location>
</feature>
<feature type="domain" description="UVR" evidence="1">
    <location>
        <begin position="199"/>
        <end position="234"/>
    </location>
</feature>
<comment type="function">
    <text evidence="1">The UvrABC repair system catalyzes the recognition and processing of DNA lesions. UvrC both incises the 5' and 3' sides of the lesion. The N-terminal half is responsible for the 3' incision and the C-terminal half is responsible for the 5' incision.</text>
</comment>
<comment type="subunit">
    <text evidence="1">Interacts with UvrB in an incision complex.</text>
</comment>
<comment type="subcellular location">
    <subcellularLocation>
        <location evidence="1">Cytoplasm</location>
    </subcellularLocation>
</comment>
<comment type="similarity">
    <text evidence="1">Belongs to the UvrC family.</text>
</comment>
<sequence length="593" mass="68685">MEDYKQRIKNKLNVVPMEPGCYLMKDRNDQVIYVGKAKKLRNRLRSYFTGAHDAKTTRLVGEIRRFEFIVTSSETESLLLELNLIKQYQPRYNILLKDDKSYPFIKITKEKYPRLLVTRTVKQGTGKYFGPYPNAYSAQETKKLLDRIYPYRKCDKMPDKLCLYYHIGQCLGPCVYDVDLSKYAQMTKEITDFLNGEDKTILKSLEERMLTASESLDFERAKEYRDLIQHIQNLTNKQKIMSSDKTIRDVFGYSVDKGWMCIQVFFIRQGNMIKRDTTMIPLQQTEEEEFYTFIGQFYSLNQHILPKEVHVPRNLDKEMIQSVVDTKIVQPARGPKKDMVDLAAHNAKVSLNNKFELISRDESRTIKAIEELGTQMGIQTPIRIEAFDNSNIQGVDPVSAMVTFIDGKPDKKNYRKYKIKTVKGPDDYKSMREVVRRRYSRVLNEGLPLPDLIIVDGGKGHMNGVIDVLQNELGLDIPVAGLQKNDKHQTSELLYGASAEIVPLKKNSQAFYLLHRIQDEVHRFAITFHRQTRQKTGLKSILDDIDGIGNKRKTLLLRSFGSIKKMKEATLEDFKNIGIPENVAKNLHEQLHK</sequence>
<gene>
    <name evidence="1" type="primary">uvrC</name>
    <name type="ordered locus">SAS1080</name>
</gene>